<gene>
    <name type="primary">RIM13</name>
    <name type="ordered locus">CAALFM_C505030CA</name>
    <name type="ORF">CaO19.11478</name>
    <name type="ORF">CaO19.3995</name>
</gene>
<name>PALB_CANAL</name>
<sequence>MPTPCLEQFLHHLEKSHLYLSIDNTKQAKKECLESIKILNSIAKTTPLPEIKVLSQYTLNHYESLDKPRTISDKLEWISSKLTQETFFPPVIQFNENFTSHNELFVDTISPIQDNDNKIFEKLPNKLAKFEYIEISNWDNDITHLKNLYQDILPNCSFVSSFLAIIDANIPIIDTITPQKSSQKYKVSLRFNGALRNVIVDSKFPIMPNSRNLIIKSYSDTELYWPALIEKAYLTIMGNGYNFSGSNMANDAYVLSGWLPQIIKLSNGQLPSNIDDLWRLRTQGKVTMGIGTGTLSKQLSSQLHLVSGHDYVIDNIKDGVITVKNPWLDPKDRVVEIKNFNHFKYLYVNWKPDHKPYQHYFLYQAKPNTYNQPQFTIKCMEETWILLERHLSETSSSPSPHWMDMNVFETEYKIITPSQYKKYLSVETNNRLQLIKLKPGVFTIVISSNKPCRFTLSSFNAMFSKSKYKYDYTETVNGEWNSDINGGNWAMSTYINNPQYDIIAKQTTELIMGMHGQGQINFHLFHSSSDSMGERIQNFDKTKLINYQNYNASYQSSSYRLTPGHYKLVVSEYYRSIGTYQLVLNSSEPITITKIPPFLGLYNISKSFNWDNTNRFKLKFETTGYNSKVKIKIAYFNGESDFELQTSYRPAMRASLFNSQTKQPIQINEQFNDSLYGVFLHEILPSPEEYILLIERFEIGYGRCVVEIGCNNKVILK</sequence>
<keyword id="KW-0378">Hydrolase</keyword>
<keyword id="KW-0645">Protease</keyword>
<keyword id="KW-1185">Reference proteome</keyword>
<keyword id="KW-0788">Thiol protease</keyword>
<comment type="function">
    <text evidence="1 3">Required for the proteolytic cleavage of the transcription factor RIM101 in response to alkaline ambient pH.</text>
</comment>
<comment type="similarity">
    <text evidence="4">Belongs to the peptidase C2 family. PalB/RIM13 subfamily.</text>
</comment>
<organism>
    <name type="scientific">Candida albicans (strain SC5314 / ATCC MYA-2876)</name>
    <name type="common">Yeast</name>
    <dbReference type="NCBI Taxonomy" id="237561"/>
    <lineage>
        <taxon>Eukaryota</taxon>
        <taxon>Fungi</taxon>
        <taxon>Dikarya</taxon>
        <taxon>Ascomycota</taxon>
        <taxon>Saccharomycotina</taxon>
        <taxon>Pichiomycetes</taxon>
        <taxon>Debaryomycetaceae</taxon>
        <taxon>Candida/Lodderomyces clade</taxon>
        <taxon>Candida</taxon>
    </lineage>
</organism>
<reference key="1">
    <citation type="journal article" date="2004" name="Proc. Natl. Acad. Sci. U.S.A.">
        <title>The diploid genome sequence of Candida albicans.</title>
        <authorList>
            <person name="Jones T."/>
            <person name="Federspiel N.A."/>
            <person name="Chibana H."/>
            <person name="Dungan J."/>
            <person name="Kalman S."/>
            <person name="Magee B.B."/>
            <person name="Newport G."/>
            <person name="Thorstenson Y.R."/>
            <person name="Agabian N."/>
            <person name="Magee P.T."/>
            <person name="Davis R.W."/>
            <person name="Scherer S."/>
        </authorList>
    </citation>
    <scope>NUCLEOTIDE SEQUENCE [LARGE SCALE GENOMIC DNA]</scope>
    <source>
        <strain>SC5314 / ATCC MYA-2876</strain>
    </source>
</reference>
<reference key="2">
    <citation type="journal article" date="2007" name="Genome Biol.">
        <title>Assembly of the Candida albicans genome into sixteen supercontigs aligned on the eight chromosomes.</title>
        <authorList>
            <person name="van het Hoog M."/>
            <person name="Rast T.J."/>
            <person name="Martchenko M."/>
            <person name="Grindle S."/>
            <person name="Dignard D."/>
            <person name="Hogues H."/>
            <person name="Cuomo C."/>
            <person name="Berriman M."/>
            <person name="Scherer S."/>
            <person name="Magee B.B."/>
            <person name="Whiteway M."/>
            <person name="Chibana H."/>
            <person name="Nantel A."/>
            <person name="Magee P.T."/>
        </authorList>
    </citation>
    <scope>GENOME REANNOTATION</scope>
    <source>
        <strain>SC5314 / ATCC MYA-2876</strain>
    </source>
</reference>
<reference key="3">
    <citation type="journal article" date="2013" name="Genome Biol.">
        <title>Assembly of a phased diploid Candida albicans genome facilitates allele-specific measurements and provides a simple model for repeat and indel structure.</title>
        <authorList>
            <person name="Muzzey D."/>
            <person name="Schwartz K."/>
            <person name="Weissman J.S."/>
            <person name="Sherlock G."/>
        </authorList>
    </citation>
    <scope>NUCLEOTIDE SEQUENCE [LARGE SCALE GENOMIC DNA]</scope>
    <scope>GENOME REANNOTATION</scope>
    <source>
        <strain>SC5314 / ATCC MYA-2876</strain>
    </source>
</reference>
<reference key="4">
    <citation type="journal article" date="2004" name="Eukaryot. Cell">
        <title>Candida albicans Rim13p, a protease required for Rim101p processing at acidic and alkaline pHs.</title>
        <authorList>
            <person name="Li M."/>
            <person name="Martin S.J."/>
            <person name="Bruno V.M."/>
            <person name="Mitchell A.P."/>
            <person name="Davis D.A."/>
        </authorList>
    </citation>
    <scope>FUNCTION</scope>
</reference>
<accession>Q5AK25</accession>
<accession>A0A1D8PP42</accession>
<evidence type="ECO:0000250" key="1"/>
<evidence type="ECO:0000255" key="2">
    <source>
        <dbReference type="PROSITE-ProRule" id="PRU00239"/>
    </source>
</evidence>
<evidence type="ECO:0000269" key="3">
    <source>
    </source>
</evidence>
<evidence type="ECO:0000305" key="4"/>
<dbReference type="EC" id="3.4.22.-"/>
<dbReference type="EMBL" id="CP017627">
    <property type="protein sequence ID" value="AOW29907.1"/>
    <property type="molecule type" value="Genomic_DNA"/>
</dbReference>
<dbReference type="RefSeq" id="XP_721903.1">
    <property type="nucleotide sequence ID" value="XM_716810.2"/>
</dbReference>
<dbReference type="SMR" id="Q5AK25"/>
<dbReference type="FunCoup" id="Q5AK25">
    <property type="interactions" value="31"/>
</dbReference>
<dbReference type="STRING" id="237561.Q5AK25"/>
<dbReference type="MEROPS" id="C02.008"/>
<dbReference type="EnsemblFungi" id="C5_05030C_A-T">
    <property type="protein sequence ID" value="C5_05030C_A-T-p1"/>
    <property type="gene ID" value="C5_05030C_A"/>
</dbReference>
<dbReference type="GeneID" id="3636487"/>
<dbReference type="KEGG" id="cal:CAALFM_C505030CA"/>
<dbReference type="CGD" id="CAL0000195739">
    <property type="gene designation" value="RIM13"/>
</dbReference>
<dbReference type="VEuPathDB" id="FungiDB:C5_05030C_A"/>
<dbReference type="eggNOG" id="KOG0045">
    <property type="taxonomic scope" value="Eukaryota"/>
</dbReference>
<dbReference type="HOGENOM" id="CLU_023416_0_0_1"/>
<dbReference type="InParanoid" id="Q5AK25"/>
<dbReference type="OrthoDB" id="167576at2759"/>
<dbReference type="PRO" id="PR:Q5AK25"/>
<dbReference type="Proteomes" id="UP000000559">
    <property type="component" value="Chromosome 5"/>
</dbReference>
<dbReference type="GO" id="GO:0004198">
    <property type="term" value="F:calcium-dependent cysteine-type endopeptidase activity"/>
    <property type="evidence" value="ECO:0000315"/>
    <property type="project" value="CGD"/>
</dbReference>
<dbReference type="GO" id="GO:0004197">
    <property type="term" value="F:cysteine-type endopeptidase activity"/>
    <property type="evidence" value="ECO:0000318"/>
    <property type="project" value="GO_Central"/>
</dbReference>
<dbReference type="GO" id="GO:0071467">
    <property type="term" value="P:cellular response to pH"/>
    <property type="evidence" value="ECO:0000315"/>
    <property type="project" value="CGD"/>
</dbReference>
<dbReference type="GO" id="GO:0001410">
    <property type="term" value="P:chlamydospore formation"/>
    <property type="evidence" value="ECO:0000315"/>
    <property type="project" value="CGD"/>
</dbReference>
<dbReference type="GO" id="GO:0030447">
    <property type="term" value="P:filamentous growth"/>
    <property type="evidence" value="ECO:0000315"/>
    <property type="project" value="CGD"/>
</dbReference>
<dbReference type="GO" id="GO:0044182">
    <property type="term" value="P:filamentous growth of a population of unicellular organisms"/>
    <property type="evidence" value="ECO:0000315"/>
    <property type="project" value="CGD"/>
</dbReference>
<dbReference type="GO" id="GO:0006508">
    <property type="term" value="P:proteolysis"/>
    <property type="evidence" value="ECO:0000318"/>
    <property type="project" value="GO_Central"/>
</dbReference>
<dbReference type="GO" id="GO:0044409">
    <property type="term" value="P:symbiont entry into host"/>
    <property type="evidence" value="ECO:0000315"/>
    <property type="project" value="CGD"/>
</dbReference>
<dbReference type="Gene3D" id="2.60.120.380">
    <property type="match status" value="1"/>
</dbReference>
<dbReference type="InterPro" id="IPR036213">
    <property type="entry name" value="Calpain_III_sf"/>
</dbReference>
<dbReference type="InterPro" id="IPR051297">
    <property type="entry name" value="PalB/RIM13_Calpain-like"/>
</dbReference>
<dbReference type="InterPro" id="IPR038765">
    <property type="entry name" value="Papain-like_cys_pep_sf"/>
</dbReference>
<dbReference type="InterPro" id="IPR001300">
    <property type="entry name" value="Peptidase_C2_calpain_cat"/>
</dbReference>
<dbReference type="PANTHER" id="PTHR46143">
    <property type="entry name" value="CALPAIN-7"/>
    <property type="match status" value="1"/>
</dbReference>
<dbReference type="PANTHER" id="PTHR46143:SF1">
    <property type="entry name" value="CALPAIN-7"/>
    <property type="match status" value="1"/>
</dbReference>
<dbReference type="Pfam" id="PF00648">
    <property type="entry name" value="Peptidase_C2"/>
    <property type="match status" value="1"/>
</dbReference>
<dbReference type="SMART" id="SM00230">
    <property type="entry name" value="CysPc"/>
    <property type="match status" value="1"/>
</dbReference>
<dbReference type="SUPFAM" id="SSF49758">
    <property type="entry name" value="Calpain large subunit, middle domain (domain III)"/>
    <property type="match status" value="1"/>
</dbReference>
<dbReference type="SUPFAM" id="SSF54001">
    <property type="entry name" value="Cysteine proteinases"/>
    <property type="match status" value="1"/>
</dbReference>
<dbReference type="PROSITE" id="PS50203">
    <property type="entry name" value="CALPAIN_CAT"/>
    <property type="match status" value="1"/>
</dbReference>
<proteinExistence type="inferred from homology"/>
<protein>
    <recommendedName>
        <fullName>Calpain-like protease palB/RIM13</fullName>
        <ecNumber>3.4.22.-</ecNumber>
    </recommendedName>
    <alternativeName>
        <fullName>Cysteine protease RIM13</fullName>
    </alternativeName>
</protein>
<feature type="chain" id="PRO_0000207738" description="Calpain-like protease palB/RIM13">
    <location>
        <begin position="1"/>
        <end position="717"/>
    </location>
</feature>
<feature type="domain" description="Calpain catalytic" evidence="2">
    <location>
        <begin position="85"/>
        <end position="352"/>
    </location>
</feature>
<feature type="active site" evidence="2">
    <location>
        <position position="156"/>
    </location>
</feature>
<feature type="active site" evidence="2">
    <location>
        <position position="309"/>
    </location>
</feature>
<feature type="active site" evidence="2">
    <location>
        <position position="325"/>
    </location>
</feature>